<evidence type="ECO:0000255" key="1">
    <source>
        <dbReference type="HAMAP-Rule" id="MF_00137"/>
    </source>
</evidence>
<dbReference type="EC" id="6.3.2.6" evidence="1"/>
<dbReference type="EMBL" id="AE016830">
    <property type="protein sequence ID" value="AAO81556.1"/>
    <property type="molecule type" value="Genomic_DNA"/>
</dbReference>
<dbReference type="RefSeq" id="NP_815486.1">
    <property type="nucleotide sequence ID" value="NC_004668.1"/>
</dbReference>
<dbReference type="RefSeq" id="WP_002369269.1">
    <property type="nucleotide sequence ID" value="NZ_KE136528.1"/>
</dbReference>
<dbReference type="SMR" id="Q833Y6"/>
<dbReference type="STRING" id="226185.EF_1785"/>
<dbReference type="EnsemblBacteria" id="AAO81556">
    <property type="protein sequence ID" value="AAO81556"/>
    <property type="gene ID" value="EF_1785"/>
</dbReference>
<dbReference type="KEGG" id="efa:EF1785"/>
<dbReference type="PATRIC" id="fig|226185.45.peg.1730"/>
<dbReference type="eggNOG" id="COG0152">
    <property type="taxonomic scope" value="Bacteria"/>
</dbReference>
<dbReference type="HOGENOM" id="CLU_061495_2_0_9"/>
<dbReference type="UniPathway" id="UPA00074">
    <property type="reaction ID" value="UER00131"/>
</dbReference>
<dbReference type="Proteomes" id="UP000001415">
    <property type="component" value="Chromosome"/>
</dbReference>
<dbReference type="GO" id="GO:0005524">
    <property type="term" value="F:ATP binding"/>
    <property type="evidence" value="ECO:0007669"/>
    <property type="project" value="UniProtKB-KW"/>
</dbReference>
<dbReference type="GO" id="GO:0004639">
    <property type="term" value="F:phosphoribosylaminoimidazolesuccinocarboxamide synthase activity"/>
    <property type="evidence" value="ECO:0007669"/>
    <property type="project" value="UniProtKB-UniRule"/>
</dbReference>
<dbReference type="GO" id="GO:0006189">
    <property type="term" value="P:'de novo' IMP biosynthetic process"/>
    <property type="evidence" value="ECO:0007669"/>
    <property type="project" value="UniProtKB-UniRule"/>
</dbReference>
<dbReference type="GO" id="GO:0009236">
    <property type="term" value="P:cobalamin biosynthetic process"/>
    <property type="evidence" value="ECO:0007669"/>
    <property type="project" value="InterPro"/>
</dbReference>
<dbReference type="CDD" id="cd01415">
    <property type="entry name" value="SAICAR_synt_PurC"/>
    <property type="match status" value="1"/>
</dbReference>
<dbReference type="FunFam" id="3.30.470.20:FF:000006">
    <property type="entry name" value="Phosphoribosylaminoimidazole-succinocarboxamide synthase"/>
    <property type="match status" value="1"/>
</dbReference>
<dbReference type="Gene3D" id="3.30.470.20">
    <property type="entry name" value="ATP-grasp fold, B domain"/>
    <property type="match status" value="1"/>
</dbReference>
<dbReference type="Gene3D" id="3.30.200.20">
    <property type="entry name" value="Phosphorylase Kinase, domain 1"/>
    <property type="match status" value="1"/>
</dbReference>
<dbReference type="HAMAP" id="MF_00137">
    <property type="entry name" value="SAICAR_synth"/>
    <property type="match status" value="1"/>
</dbReference>
<dbReference type="InterPro" id="IPR028923">
    <property type="entry name" value="SAICAR_synt/ADE2_N"/>
</dbReference>
<dbReference type="InterPro" id="IPR033934">
    <property type="entry name" value="SAICAR_synt_PurC"/>
</dbReference>
<dbReference type="InterPro" id="IPR001636">
    <property type="entry name" value="SAICAR_synth"/>
</dbReference>
<dbReference type="InterPro" id="IPR050089">
    <property type="entry name" value="SAICAR_synthetase"/>
</dbReference>
<dbReference type="InterPro" id="IPR018236">
    <property type="entry name" value="SAICAR_synthetase_CS"/>
</dbReference>
<dbReference type="NCBIfam" id="TIGR00081">
    <property type="entry name" value="purC"/>
    <property type="match status" value="1"/>
</dbReference>
<dbReference type="PANTHER" id="PTHR43599">
    <property type="entry name" value="MULTIFUNCTIONAL PROTEIN ADE2"/>
    <property type="match status" value="1"/>
</dbReference>
<dbReference type="PANTHER" id="PTHR43599:SF3">
    <property type="entry name" value="SI:DKEY-6E2.2"/>
    <property type="match status" value="1"/>
</dbReference>
<dbReference type="Pfam" id="PF01259">
    <property type="entry name" value="SAICAR_synt"/>
    <property type="match status" value="1"/>
</dbReference>
<dbReference type="SUPFAM" id="SSF56104">
    <property type="entry name" value="SAICAR synthase-like"/>
    <property type="match status" value="1"/>
</dbReference>
<dbReference type="PROSITE" id="PS01057">
    <property type="entry name" value="SAICAR_SYNTHETASE_1"/>
    <property type="match status" value="1"/>
</dbReference>
<dbReference type="PROSITE" id="PS01058">
    <property type="entry name" value="SAICAR_SYNTHETASE_2"/>
    <property type="match status" value="1"/>
</dbReference>
<organism>
    <name type="scientific">Enterococcus faecalis (strain ATCC 700802 / V583)</name>
    <dbReference type="NCBI Taxonomy" id="226185"/>
    <lineage>
        <taxon>Bacteria</taxon>
        <taxon>Bacillati</taxon>
        <taxon>Bacillota</taxon>
        <taxon>Bacilli</taxon>
        <taxon>Lactobacillales</taxon>
        <taxon>Enterococcaceae</taxon>
        <taxon>Enterococcus</taxon>
    </lineage>
</organism>
<reference key="1">
    <citation type="journal article" date="2003" name="Science">
        <title>Role of mobile DNA in the evolution of vancomycin-resistant Enterococcus faecalis.</title>
        <authorList>
            <person name="Paulsen I.T."/>
            <person name="Banerjei L."/>
            <person name="Myers G.S.A."/>
            <person name="Nelson K.E."/>
            <person name="Seshadri R."/>
            <person name="Read T.D."/>
            <person name="Fouts D.E."/>
            <person name="Eisen J.A."/>
            <person name="Gill S.R."/>
            <person name="Heidelberg J.F."/>
            <person name="Tettelin H."/>
            <person name="Dodson R.J."/>
            <person name="Umayam L.A."/>
            <person name="Brinkac L.M."/>
            <person name="Beanan M.J."/>
            <person name="Daugherty S.C."/>
            <person name="DeBoy R.T."/>
            <person name="Durkin S.A."/>
            <person name="Kolonay J.F."/>
            <person name="Madupu R."/>
            <person name="Nelson W.C."/>
            <person name="Vamathevan J.J."/>
            <person name="Tran B."/>
            <person name="Upton J."/>
            <person name="Hansen T."/>
            <person name="Shetty J."/>
            <person name="Khouri H.M."/>
            <person name="Utterback T.R."/>
            <person name="Radune D."/>
            <person name="Ketchum K.A."/>
            <person name="Dougherty B.A."/>
            <person name="Fraser C.M."/>
        </authorList>
    </citation>
    <scope>NUCLEOTIDE SEQUENCE [LARGE SCALE GENOMIC DNA]</scope>
    <source>
        <strain>ATCC 700802 / V583</strain>
    </source>
</reference>
<proteinExistence type="inferred from homology"/>
<name>PUR7_ENTFA</name>
<accession>Q833Y6</accession>
<gene>
    <name evidence="1" type="primary">purC</name>
    <name type="ordered locus">EF_1785</name>
</gene>
<protein>
    <recommendedName>
        <fullName evidence="1">Phosphoribosylaminoimidazole-succinocarboxamide synthase</fullName>
        <ecNumber evidence="1">6.3.2.6</ecNumber>
    </recommendedName>
    <alternativeName>
        <fullName evidence="1">SAICAR synthetase</fullName>
    </alternativeName>
</protein>
<sequence>MEKKALVYTGKAKKLYQTENAAVLFVEYLDQATALNGQKKDKVLGKGALNNQITSLIFEHLQQQKIPNHFIKKVSEHEQLIQVVEMIPLEVVVRNYAAGSFSKRLAIEEGTKLVTPIIEFYYKEDRLDDPFINEDHIQFLKVATPAEIVEIKALALQINQALSQLFQRLNICLIDFKIEIGRTKANQLLLADEISPDTCRLWDLNTNEHLDKDVYRRELGEIVPVYEEVLQRLLTAN</sequence>
<feature type="chain" id="PRO_0000100828" description="Phosphoribosylaminoimidazole-succinocarboxamide synthase">
    <location>
        <begin position="1"/>
        <end position="237"/>
    </location>
</feature>
<keyword id="KW-0067">ATP-binding</keyword>
<keyword id="KW-0436">Ligase</keyword>
<keyword id="KW-0547">Nucleotide-binding</keyword>
<keyword id="KW-0658">Purine biosynthesis</keyword>
<keyword id="KW-1185">Reference proteome</keyword>
<comment type="catalytic activity">
    <reaction evidence="1">
        <text>5-amino-1-(5-phospho-D-ribosyl)imidazole-4-carboxylate + L-aspartate + ATP = (2S)-2-[5-amino-1-(5-phospho-beta-D-ribosyl)imidazole-4-carboxamido]succinate + ADP + phosphate + 2 H(+)</text>
        <dbReference type="Rhea" id="RHEA:22628"/>
        <dbReference type="ChEBI" id="CHEBI:15378"/>
        <dbReference type="ChEBI" id="CHEBI:29991"/>
        <dbReference type="ChEBI" id="CHEBI:30616"/>
        <dbReference type="ChEBI" id="CHEBI:43474"/>
        <dbReference type="ChEBI" id="CHEBI:58443"/>
        <dbReference type="ChEBI" id="CHEBI:77657"/>
        <dbReference type="ChEBI" id="CHEBI:456216"/>
        <dbReference type="EC" id="6.3.2.6"/>
    </reaction>
</comment>
<comment type="pathway">
    <text evidence="1">Purine metabolism; IMP biosynthesis via de novo pathway; 5-amino-1-(5-phospho-D-ribosyl)imidazole-4-carboxamide from 5-amino-1-(5-phospho-D-ribosyl)imidazole-4-carboxylate: step 1/2.</text>
</comment>
<comment type="similarity">
    <text evidence="1">Belongs to the SAICAR synthetase family.</text>
</comment>